<keyword id="KW-0326">Glycosidase</keyword>
<keyword id="KW-0378">Hydrolase</keyword>
<keyword id="KW-0456">Lyase</keyword>
<keyword id="KW-0464">Manganese</keyword>
<keyword id="KW-0479">Metal-binding</keyword>
<keyword id="KW-1185">Reference proteome</keyword>
<feature type="chain" id="PRO_0000390520" description="Pseudouridine-5'-phosphate glycosidase">
    <location>
        <begin position="1"/>
        <end position="306"/>
    </location>
</feature>
<feature type="active site" description="Proton donor" evidence="1">
    <location>
        <position position="28"/>
    </location>
</feature>
<feature type="active site" description="Nucleophile" evidence="1">
    <location>
        <position position="160"/>
    </location>
</feature>
<feature type="binding site" evidence="1">
    <location>
        <position position="89"/>
    </location>
    <ligand>
        <name>substrate</name>
    </ligand>
</feature>
<feature type="binding site" evidence="1">
    <location>
        <position position="109"/>
    </location>
    <ligand>
        <name>substrate</name>
    </ligand>
</feature>
<feature type="binding site" evidence="1">
    <location>
        <position position="139"/>
    </location>
    <ligand>
        <name>Mn(2+)</name>
        <dbReference type="ChEBI" id="CHEBI:29035"/>
    </ligand>
</feature>
<feature type="binding site" evidence="1">
    <location>
        <begin position="141"/>
        <end position="143"/>
    </location>
    <ligand>
        <name>substrate</name>
    </ligand>
</feature>
<accession>C1AA54</accession>
<name>PSUG_GEMAT</name>
<organism>
    <name type="scientific">Gemmatimonas aurantiaca (strain DSM 14586 / JCM 11422 / NBRC 100505 / T-27)</name>
    <dbReference type="NCBI Taxonomy" id="379066"/>
    <lineage>
        <taxon>Bacteria</taxon>
        <taxon>Pseudomonadati</taxon>
        <taxon>Gemmatimonadota</taxon>
        <taxon>Gemmatimonadia</taxon>
        <taxon>Gemmatimonadales</taxon>
        <taxon>Gemmatimonadaceae</taxon>
        <taxon>Gemmatimonas</taxon>
    </lineage>
</organism>
<dbReference type="EC" id="4.2.1.70" evidence="1"/>
<dbReference type="EMBL" id="AP009153">
    <property type="protein sequence ID" value="BAH39652.1"/>
    <property type="molecule type" value="Genomic_DNA"/>
</dbReference>
<dbReference type="RefSeq" id="WP_015894421.1">
    <property type="nucleotide sequence ID" value="NC_012489.1"/>
</dbReference>
<dbReference type="SMR" id="C1AA54"/>
<dbReference type="STRING" id="379066.GAU_2610"/>
<dbReference type="KEGG" id="gau:GAU_2610"/>
<dbReference type="eggNOG" id="COG2313">
    <property type="taxonomic scope" value="Bacteria"/>
</dbReference>
<dbReference type="HOGENOM" id="CLU_012201_0_1_0"/>
<dbReference type="Proteomes" id="UP000002209">
    <property type="component" value="Chromosome"/>
</dbReference>
<dbReference type="GO" id="GO:0005737">
    <property type="term" value="C:cytoplasm"/>
    <property type="evidence" value="ECO:0007669"/>
    <property type="project" value="TreeGrafter"/>
</dbReference>
<dbReference type="GO" id="GO:0016798">
    <property type="term" value="F:hydrolase activity, acting on glycosyl bonds"/>
    <property type="evidence" value="ECO:0007669"/>
    <property type="project" value="UniProtKB-KW"/>
</dbReference>
<dbReference type="GO" id="GO:0046872">
    <property type="term" value="F:metal ion binding"/>
    <property type="evidence" value="ECO:0007669"/>
    <property type="project" value="UniProtKB-KW"/>
</dbReference>
<dbReference type="GO" id="GO:0004730">
    <property type="term" value="F:pseudouridylate synthase activity"/>
    <property type="evidence" value="ECO:0007669"/>
    <property type="project" value="UniProtKB-UniRule"/>
</dbReference>
<dbReference type="GO" id="GO:0046113">
    <property type="term" value="P:nucleobase catabolic process"/>
    <property type="evidence" value="ECO:0007669"/>
    <property type="project" value="UniProtKB-UniRule"/>
</dbReference>
<dbReference type="Gene3D" id="3.40.1790.10">
    <property type="entry name" value="Indigoidine synthase domain"/>
    <property type="match status" value="1"/>
</dbReference>
<dbReference type="HAMAP" id="MF_01876">
    <property type="entry name" value="PsiMP_glycosidase"/>
    <property type="match status" value="1"/>
</dbReference>
<dbReference type="InterPro" id="IPR022830">
    <property type="entry name" value="Indigdn_synthA-like"/>
</dbReference>
<dbReference type="InterPro" id="IPR007342">
    <property type="entry name" value="PsuG"/>
</dbReference>
<dbReference type="PANTHER" id="PTHR42909:SF1">
    <property type="entry name" value="CARBOHYDRATE KINASE PFKB DOMAIN-CONTAINING PROTEIN"/>
    <property type="match status" value="1"/>
</dbReference>
<dbReference type="PANTHER" id="PTHR42909">
    <property type="entry name" value="ZGC:136858"/>
    <property type="match status" value="1"/>
</dbReference>
<dbReference type="Pfam" id="PF04227">
    <property type="entry name" value="Indigoidine_A"/>
    <property type="match status" value="1"/>
</dbReference>
<dbReference type="SUPFAM" id="SSF110581">
    <property type="entry name" value="Indigoidine synthase A-like"/>
    <property type="match status" value="1"/>
</dbReference>
<evidence type="ECO:0000255" key="1">
    <source>
        <dbReference type="HAMAP-Rule" id="MF_01876"/>
    </source>
</evidence>
<reference key="1">
    <citation type="submission" date="2006-03" db="EMBL/GenBank/DDBJ databases">
        <title>Complete genome sequence of Gemmatimonas aurantiaca T-27 that represents a novel phylum Gemmatimonadetes.</title>
        <authorList>
            <person name="Takasaki K."/>
            <person name="Ichikawa N."/>
            <person name="Miura H."/>
            <person name="Matsushita S."/>
            <person name="Watanabe Y."/>
            <person name="Oguchi A."/>
            <person name="Ankai A."/>
            <person name="Yashiro I."/>
            <person name="Takahashi M."/>
            <person name="Terui Y."/>
            <person name="Fukui S."/>
            <person name="Yokoyama H."/>
            <person name="Tanikawa S."/>
            <person name="Hanada S."/>
            <person name="Kamagata Y."/>
            <person name="Fujita N."/>
        </authorList>
    </citation>
    <scope>NUCLEOTIDE SEQUENCE [LARGE SCALE GENOMIC DNA]</scope>
    <source>
        <strain>DSM 14586 / JCM 11422 / NBRC 100505 / T-27</strain>
    </source>
</reference>
<comment type="function">
    <text evidence="1">Catalyzes the reversible cleavage of pseudouridine 5'-phosphate (PsiMP) to ribose 5-phosphate and uracil. Functions biologically in the cleavage direction, as part of a pseudouridine degradation pathway.</text>
</comment>
<comment type="catalytic activity">
    <reaction evidence="1">
        <text>D-ribose 5-phosphate + uracil = psi-UMP + H2O</text>
        <dbReference type="Rhea" id="RHEA:18337"/>
        <dbReference type="ChEBI" id="CHEBI:15377"/>
        <dbReference type="ChEBI" id="CHEBI:17568"/>
        <dbReference type="ChEBI" id="CHEBI:58380"/>
        <dbReference type="ChEBI" id="CHEBI:78346"/>
        <dbReference type="EC" id="4.2.1.70"/>
    </reaction>
</comment>
<comment type="cofactor">
    <cofactor evidence="1">
        <name>Mn(2+)</name>
        <dbReference type="ChEBI" id="CHEBI:29035"/>
    </cofactor>
    <text evidence="1">Binds 1 Mn(2+) ion per subunit.</text>
</comment>
<comment type="subunit">
    <text evidence="1">Homotrimer.</text>
</comment>
<comment type="similarity">
    <text evidence="1">Belongs to the pseudouridine-5'-phosphate glycosidase family.</text>
</comment>
<protein>
    <recommendedName>
        <fullName evidence="1">Pseudouridine-5'-phosphate glycosidase</fullName>
        <shortName evidence="1">PsiMP glycosidase</shortName>
        <ecNumber evidence="1">4.2.1.70</ecNumber>
    </recommendedName>
</protein>
<proteinExistence type="inferred from homology"/>
<sequence>MSERLLRPRATSTVFEALERGAALVALESSVLAQGLEPPYNREAARRMTEAVTAVGAIPVITAISRGTPTLGLDDEDLERFLQRDGVRKVSARDLGIAMADGADGATTVAATLALCALGGLEVFATGGIGGVHRDAPFDESADLIELSRTPVIVVCAGAKSILDLPATLERLETLGVPVVGCGTDELPGFFSLSTGLRLTSRLDRPEQIARAWRAHRALGRESAMLVVQPPPADVAIPADIVDAATRAALQAASLAGIRGAAVTPYLLAQIQQRTEGRSVSANLALLEANARLAGQIAVALVEGTP</sequence>
<gene>
    <name evidence="1" type="primary">psuG</name>
    <name type="ordered locus">GAU_2610</name>
</gene>